<accession>A4WE78</accession>
<organism>
    <name type="scientific">Enterobacter sp. (strain 638)</name>
    <dbReference type="NCBI Taxonomy" id="399742"/>
    <lineage>
        <taxon>Bacteria</taxon>
        <taxon>Pseudomonadati</taxon>
        <taxon>Pseudomonadota</taxon>
        <taxon>Gammaproteobacteria</taxon>
        <taxon>Enterobacterales</taxon>
        <taxon>Enterobacteriaceae</taxon>
        <taxon>Enterobacter</taxon>
    </lineage>
</organism>
<gene>
    <name evidence="1" type="primary">metK</name>
    <name type="ordered locus">Ent638_3346</name>
</gene>
<name>METK_ENT38</name>
<protein>
    <recommendedName>
        <fullName evidence="1">S-adenosylmethionine synthase</fullName>
        <shortName evidence="1">AdoMet synthase</shortName>
        <ecNumber evidence="1">2.5.1.6</ecNumber>
    </recommendedName>
    <alternativeName>
        <fullName evidence="1">MAT</fullName>
    </alternativeName>
    <alternativeName>
        <fullName evidence="1">Methionine adenosyltransferase</fullName>
    </alternativeName>
</protein>
<comment type="function">
    <text evidence="1">Catalyzes the formation of S-adenosylmethionine (AdoMet) from methionine and ATP. The overall synthetic reaction is composed of two sequential steps, AdoMet formation and the subsequent tripolyphosphate hydrolysis which occurs prior to release of AdoMet from the enzyme.</text>
</comment>
<comment type="catalytic activity">
    <reaction evidence="1">
        <text>L-methionine + ATP + H2O = S-adenosyl-L-methionine + phosphate + diphosphate</text>
        <dbReference type="Rhea" id="RHEA:21080"/>
        <dbReference type="ChEBI" id="CHEBI:15377"/>
        <dbReference type="ChEBI" id="CHEBI:30616"/>
        <dbReference type="ChEBI" id="CHEBI:33019"/>
        <dbReference type="ChEBI" id="CHEBI:43474"/>
        <dbReference type="ChEBI" id="CHEBI:57844"/>
        <dbReference type="ChEBI" id="CHEBI:59789"/>
        <dbReference type="EC" id="2.5.1.6"/>
    </reaction>
</comment>
<comment type="cofactor">
    <cofactor evidence="1">
        <name>Mg(2+)</name>
        <dbReference type="ChEBI" id="CHEBI:18420"/>
    </cofactor>
    <text evidence="1">Binds 2 divalent ions per subunit.</text>
</comment>
<comment type="cofactor">
    <cofactor evidence="1">
        <name>K(+)</name>
        <dbReference type="ChEBI" id="CHEBI:29103"/>
    </cofactor>
    <text evidence="1">Binds 1 potassium ion per subunit.</text>
</comment>
<comment type="pathway">
    <text evidence="1">Amino-acid biosynthesis; S-adenosyl-L-methionine biosynthesis; S-adenosyl-L-methionine from L-methionine: step 1/1.</text>
</comment>
<comment type="subunit">
    <text evidence="1">Homotetramer; dimer of dimers.</text>
</comment>
<comment type="subcellular location">
    <subcellularLocation>
        <location evidence="1">Cytoplasm</location>
    </subcellularLocation>
</comment>
<comment type="similarity">
    <text evidence="1">Belongs to the AdoMet synthase family.</text>
</comment>
<reference key="1">
    <citation type="journal article" date="2010" name="PLoS Genet.">
        <title>Genome sequence of the plant growth promoting endophytic bacterium Enterobacter sp. 638.</title>
        <authorList>
            <person name="Taghavi S."/>
            <person name="van der Lelie D."/>
            <person name="Hoffman A."/>
            <person name="Zhang Y.B."/>
            <person name="Walla M.D."/>
            <person name="Vangronsveld J."/>
            <person name="Newman L."/>
            <person name="Monchy S."/>
        </authorList>
    </citation>
    <scope>NUCLEOTIDE SEQUENCE [LARGE SCALE GENOMIC DNA]</scope>
    <source>
        <strain>638</strain>
    </source>
</reference>
<sequence length="384" mass="41910">MAKHLFTSESVSEGHPDKIADQISDAVLDAILEQDPKARVACETYVKTGMVLVGGEITTSAWVDIEEITRNTVREIGYVHSDMGFDANSCAVLSAIGKQSPDINQGVDRADPLEQGAGDQGLMFGYATNETDVLMPAPITYAHRLVQRQAEVRKNGSLPWLRPDAKSQVTFQYDDGKIVGIDAVVLSTQHSEDIDQKSLQEAVMEEIIKPVLPTEWLNASTKFFINPTGRFVIGGPMGDCGLTGRKIIVDTYGGMARHGGGAFSGKDPSKVDRSAAYAARYVAKNIVAAGLADRCEIQVSYAIGVAEPTSIMVETFGTEKLPTEQLTLLVREFFDLRPYGLIQMLDLLHPIYKETAAYGHFGREHFPWEKTDKAAVLRDAAGLK</sequence>
<keyword id="KW-0067">ATP-binding</keyword>
<keyword id="KW-0963">Cytoplasm</keyword>
<keyword id="KW-0460">Magnesium</keyword>
<keyword id="KW-0479">Metal-binding</keyword>
<keyword id="KW-0547">Nucleotide-binding</keyword>
<keyword id="KW-0554">One-carbon metabolism</keyword>
<keyword id="KW-0630">Potassium</keyword>
<keyword id="KW-0808">Transferase</keyword>
<feature type="chain" id="PRO_1000057561" description="S-adenosylmethionine synthase">
    <location>
        <begin position="1"/>
        <end position="384"/>
    </location>
</feature>
<feature type="region of interest" description="Flexible loop" evidence="1">
    <location>
        <begin position="99"/>
        <end position="109"/>
    </location>
</feature>
<feature type="binding site" description="in other chain" evidence="1">
    <location>
        <position position="15"/>
    </location>
    <ligand>
        <name>ATP</name>
        <dbReference type="ChEBI" id="CHEBI:30616"/>
        <note>ligand shared between two neighboring subunits</note>
    </ligand>
</feature>
<feature type="binding site" evidence="1">
    <location>
        <position position="17"/>
    </location>
    <ligand>
        <name>Mg(2+)</name>
        <dbReference type="ChEBI" id="CHEBI:18420"/>
    </ligand>
</feature>
<feature type="binding site" evidence="1">
    <location>
        <position position="43"/>
    </location>
    <ligand>
        <name>K(+)</name>
        <dbReference type="ChEBI" id="CHEBI:29103"/>
    </ligand>
</feature>
<feature type="binding site" description="in other chain" evidence="1">
    <location>
        <position position="56"/>
    </location>
    <ligand>
        <name>L-methionine</name>
        <dbReference type="ChEBI" id="CHEBI:57844"/>
        <note>ligand shared between two neighboring subunits</note>
    </ligand>
</feature>
<feature type="binding site" description="in other chain" evidence="1">
    <location>
        <position position="99"/>
    </location>
    <ligand>
        <name>L-methionine</name>
        <dbReference type="ChEBI" id="CHEBI:57844"/>
        <note>ligand shared between two neighboring subunits</note>
    </ligand>
</feature>
<feature type="binding site" description="in other chain" evidence="1">
    <location>
        <begin position="164"/>
        <end position="166"/>
    </location>
    <ligand>
        <name>ATP</name>
        <dbReference type="ChEBI" id="CHEBI:30616"/>
        <note>ligand shared between two neighboring subunits</note>
    </ligand>
</feature>
<feature type="binding site" description="in other chain" evidence="1">
    <location>
        <begin position="230"/>
        <end position="231"/>
    </location>
    <ligand>
        <name>ATP</name>
        <dbReference type="ChEBI" id="CHEBI:30616"/>
        <note>ligand shared between two neighboring subunits</note>
    </ligand>
</feature>
<feature type="binding site" evidence="1">
    <location>
        <position position="239"/>
    </location>
    <ligand>
        <name>ATP</name>
        <dbReference type="ChEBI" id="CHEBI:30616"/>
        <note>ligand shared between two neighboring subunits</note>
    </ligand>
</feature>
<feature type="binding site" evidence="1">
    <location>
        <position position="239"/>
    </location>
    <ligand>
        <name>L-methionine</name>
        <dbReference type="ChEBI" id="CHEBI:57844"/>
        <note>ligand shared between two neighboring subunits</note>
    </ligand>
</feature>
<feature type="binding site" description="in other chain" evidence="1">
    <location>
        <begin position="245"/>
        <end position="246"/>
    </location>
    <ligand>
        <name>ATP</name>
        <dbReference type="ChEBI" id="CHEBI:30616"/>
        <note>ligand shared between two neighboring subunits</note>
    </ligand>
</feature>
<feature type="binding site" evidence="1">
    <location>
        <position position="262"/>
    </location>
    <ligand>
        <name>ATP</name>
        <dbReference type="ChEBI" id="CHEBI:30616"/>
        <note>ligand shared between two neighboring subunits</note>
    </ligand>
</feature>
<feature type="binding site" evidence="1">
    <location>
        <position position="266"/>
    </location>
    <ligand>
        <name>ATP</name>
        <dbReference type="ChEBI" id="CHEBI:30616"/>
        <note>ligand shared between two neighboring subunits</note>
    </ligand>
</feature>
<feature type="binding site" description="in other chain" evidence="1">
    <location>
        <position position="270"/>
    </location>
    <ligand>
        <name>L-methionine</name>
        <dbReference type="ChEBI" id="CHEBI:57844"/>
        <note>ligand shared between two neighboring subunits</note>
    </ligand>
</feature>
<dbReference type="EC" id="2.5.1.6" evidence="1"/>
<dbReference type="EMBL" id="CP000653">
    <property type="protein sequence ID" value="ABP62008.1"/>
    <property type="molecule type" value="Genomic_DNA"/>
</dbReference>
<dbReference type="RefSeq" id="WP_015960336.1">
    <property type="nucleotide sequence ID" value="NC_009436.1"/>
</dbReference>
<dbReference type="SMR" id="A4WE78"/>
<dbReference type="STRING" id="399742.Ent638_3346"/>
<dbReference type="KEGG" id="ent:Ent638_3346"/>
<dbReference type="eggNOG" id="COG0192">
    <property type="taxonomic scope" value="Bacteria"/>
</dbReference>
<dbReference type="HOGENOM" id="CLU_041802_1_1_6"/>
<dbReference type="OrthoDB" id="9801686at2"/>
<dbReference type="UniPathway" id="UPA00315">
    <property type="reaction ID" value="UER00080"/>
</dbReference>
<dbReference type="Proteomes" id="UP000000230">
    <property type="component" value="Chromosome"/>
</dbReference>
<dbReference type="GO" id="GO:0005737">
    <property type="term" value="C:cytoplasm"/>
    <property type="evidence" value="ECO:0007669"/>
    <property type="project" value="UniProtKB-SubCell"/>
</dbReference>
<dbReference type="GO" id="GO:0005524">
    <property type="term" value="F:ATP binding"/>
    <property type="evidence" value="ECO:0007669"/>
    <property type="project" value="UniProtKB-UniRule"/>
</dbReference>
<dbReference type="GO" id="GO:0000287">
    <property type="term" value="F:magnesium ion binding"/>
    <property type="evidence" value="ECO:0007669"/>
    <property type="project" value="UniProtKB-UniRule"/>
</dbReference>
<dbReference type="GO" id="GO:0004478">
    <property type="term" value="F:methionine adenosyltransferase activity"/>
    <property type="evidence" value="ECO:0007669"/>
    <property type="project" value="UniProtKB-UniRule"/>
</dbReference>
<dbReference type="GO" id="GO:0006730">
    <property type="term" value="P:one-carbon metabolic process"/>
    <property type="evidence" value="ECO:0007669"/>
    <property type="project" value="UniProtKB-KW"/>
</dbReference>
<dbReference type="GO" id="GO:0006556">
    <property type="term" value="P:S-adenosylmethionine biosynthetic process"/>
    <property type="evidence" value="ECO:0007669"/>
    <property type="project" value="UniProtKB-UniRule"/>
</dbReference>
<dbReference type="CDD" id="cd18079">
    <property type="entry name" value="S-AdoMet_synt"/>
    <property type="match status" value="1"/>
</dbReference>
<dbReference type="FunFam" id="3.30.300.10:FF:000001">
    <property type="entry name" value="S-adenosylmethionine synthase"/>
    <property type="match status" value="1"/>
</dbReference>
<dbReference type="FunFam" id="3.30.300.10:FF:000003">
    <property type="entry name" value="S-adenosylmethionine synthase"/>
    <property type="match status" value="1"/>
</dbReference>
<dbReference type="Gene3D" id="3.30.300.10">
    <property type="match status" value="3"/>
</dbReference>
<dbReference type="HAMAP" id="MF_00086">
    <property type="entry name" value="S_AdoMet_synth1"/>
    <property type="match status" value="1"/>
</dbReference>
<dbReference type="InterPro" id="IPR022631">
    <property type="entry name" value="ADOMET_SYNTHASE_CS"/>
</dbReference>
<dbReference type="InterPro" id="IPR022630">
    <property type="entry name" value="S-AdoMet_synt_C"/>
</dbReference>
<dbReference type="InterPro" id="IPR022629">
    <property type="entry name" value="S-AdoMet_synt_central"/>
</dbReference>
<dbReference type="InterPro" id="IPR022628">
    <property type="entry name" value="S-AdoMet_synt_N"/>
</dbReference>
<dbReference type="InterPro" id="IPR002133">
    <property type="entry name" value="S-AdoMet_synthetase"/>
</dbReference>
<dbReference type="InterPro" id="IPR022636">
    <property type="entry name" value="S-AdoMet_synthetase_sfam"/>
</dbReference>
<dbReference type="NCBIfam" id="TIGR01034">
    <property type="entry name" value="metK"/>
    <property type="match status" value="1"/>
</dbReference>
<dbReference type="PANTHER" id="PTHR11964">
    <property type="entry name" value="S-ADENOSYLMETHIONINE SYNTHETASE"/>
    <property type="match status" value="1"/>
</dbReference>
<dbReference type="Pfam" id="PF02773">
    <property type="entry name" value="S-AdoMet_synt_C"/>
    <property type="match status" value="1"/>
</dbReference>
<dbReference type="Pfam" id="PF02772">
    <property type="entry name" value="S-AdoMet_synt_M"/>
    <property type="match status" value="1"/>
</dbReference>
<dbReference type="Pfam" id="PF00438">
    <property type="entry name" value="S-AdoMet_synt_N"/>
    <property type="match status" value="1"/>
</dbReference>
<dbReference type="PIRSF" id="PIRSF000497">
    <property type="entry name" value="MAT"/>
    <property type="match status" value="1"/>
</dbReference>
<dbReference type="SUPFAM" id="SSF55973">
    <property type="entry name" value="S-adenosylmethionine synthetase"/>
    <property type="match status" value="3"/>
</dbReference>
<dbReference type="PROSITE" id="PS00376">
    <property type="entry name" value="ADOMET_SYNTHASE_1"/>
    <property type="match status" value="1"/>
</dbReference>
<dbReference type="PROSITE" id="PS00377">
    <property type="entry name" value="ADOMET_SYNTHASE_2"/>
    <property type="match status" value="1"/>
</dbReference>
<proteinExistence type="inferred from homology"/>
<evidence type="ECO:0000255" key="1">
    <source>
        <dbReference type="HAMAP-Rule" id="MF_00086"/>
    </source>
</evidence>